<organism evidence="8">
    <name type="scientific">Streptococcus pneumoniae (strain ATCC BAA-255 / R6)</name>
    <dbReference type="NCBI Taxonomy" id="171101"/>
    <lineage>
        <taxon>Bacteria</taxon>
        <taxon>Bacillati</taxon>
        <taxon>Bacillota</taxon>
        <taxon>Bacilli</taxon>
        <taxon>Lactobacillales</taxon>
        <taxon>Streptococcaceae</taxon>
        <taxon>Streptococcus</taxon>
    </lineage>
</organism>
<protein>
    <recommendedName>
        <fullName evidence="5">Competence protein ComGA</fullName>
    </recommendedName>
</protein>
<evidence type="ECO:0000250" key="1">
    <source>
        <dbReference type="UniProtKB" id="P25953"/>
    </source>
</evidence>
<evidence type="ECO:0000255" key="2">
    <source>
        <dbReference type="PROSITE-ProRule" id="PRU00499"/>
    </source>
</evidence>
<evidence type="ECO:0000269" key="3">
    <source>
    </source>
</evidence>
<evidence type="ECO:0000269" key="4">
    <source>
    </source>
</evidence>
<evidence type="ECO:0000303" key="5">
    <source>
    </source>
</evidence>
<evidence type="ECO:0000305" key="6"/>
<evidence type="ECO:0000312" key="7">
    <source>
        <dbReference type="EMBL" id="AAL00666.1"/>
    </source>
</evidence>
<evidence type="ECO:0000312" key="8">
    <source>
        <dbReference type="Proteomes" id="UP000000586"/>
    </source>
</evidence>
<feature type="chain" id="PRO_0000459376" description="Competence protein ComGA">
    <location>
        <begin position="1"/>
        <end position="313"/>
    </location>
</feature>
<feature type="binding site" evidence="2">
    <location>
        <begin position="138"/>
        <end position="145"/>
    </location>
    <ligand>
        <name>ATP</name>
        <dbReference type="ChEBI" id="CHEBI:30616"/>
    </ligand>
</feature>
<reference evidence="8" key="1">
    <citation type="journal article" date="2001" name="J. Bacteriol.">
        <title>Genome of the bacterium Streptococcus pneumoniae strain R6.</title>
        <authorList>
            <person name="Hoskins J."/>
            <person name="Alborn W.E. Jr."/>
            <person name="Arnold J."/>
            <person name="Blaszczak L.C."/>
            <person name="Burgett S."/>
            <person name="DeHoff B.S."/>
            <person name="Estrem S.T."/>
            <person name="Fritz L."/>
            <person name="Fu D.-J."/>
            <person name="Fuller W."/>
            <person name="Geringer C."/>
            <person name="Gilmour R."/>
            <person name="Glass J.S."/>
            <person name="Khoja H."/>
            <person name="Kraft A.R."/>
            <person name="Lagace R.E."/>
            <person name="LeBlanc D.J."/>
            <person name="Lee L.N."/>
            <person name="Lefkowitz E.J."/>
            <person name="Lu J."/>
            <person name="Matsushima P."/>
            <person name="McAhren S.M."/>
            <person name="McHenney M."/>
            <person name="McLeaster K."/>
            <person name="Mundy C.W."/>
            <person name="Nicas T.I."/>
            <person name="Norris F.H."/>
            <person name="O'Gara M."/>
            <person name="Peery R.B."/>
            <person name="Robertson G.T."/>
            <person name="Rockey P."/>
            <person name="Sun P.-M."/>
            <person name="Winkler M.E."/>
            <person name="Yang Y."/>
            <person name="Young-Bellido M."/>
            <person name="Zhao G."/>
            <person name="Zook C.A."/>
            <person name="Baltz R.H."/>
            <person name="Jaskunas S.R."/>
            <person name="Rosteck P.R. Jr."/>
            <person name="Skatrud P.L."/>
            <person name="Glass J.I."/>
        </authorList>
    </citation>
    <scope>NUCLEOTIDE SEQUENCE [LARGE SCALE GENOMIC DNA]</scope>
    <source>
        <strain evidence="8">ATCC BAA-255 / R6</strain>
    </source>
</reference>
<reference evidence="6" key="2">
    <citation type="journal article" date="2002" name="Mol. Microbiol.">
        <title>Uptake of transforming DNA in Gram-positive bacteria: a view from Streptococcus pneumoniae.</title>
        <authorList>
            <person name="Berge M."/>
            <person name="Moscoso M."/>
            <person name="Prudhomme M."/>
            <person name="Martin B."/>
            <person name="Claverys J.P."/>
        </authorList>
    </citation>
    <scope>FUNCTION</scope>
</reference>
<reference evidence="6" key="3">
    <citation type="journal article" date="2013" name="PLoS Pathog.">
        <title>A type IV pilus mediates DNA binding during natural transformation in Streptococcus pneumoniae.</title>
        <authorList>
            <person name="Laurenceau R."/>
            <person name="Pehau-Arnaudet G."/>
            <person name="Baconnais S."/>
            <person name="Gault J."/>
            <person name="Malosse C."/>
            <person name="Dujeancourt A."/>
            <person name="Campo N."/>
            <person name="Chamot-Rooke J."/>
            <person name="Le Cam E."/>
            <person name="Claverys J.P."/>
            <person name="Fronzes R."/>
        </authorList>
    </citation>
    <scope>FUNCTION</scope>
    <scope>DISRUPTION PHENOTYPE</scope>
</reference>
<keyword id="KW-0067">ATP-binding</keyword>
<keyword id="KW-1003">Cell membrane</keyword>
<keyword id="KW-0472">Membrane</keyword>
<keyword id="KW-0547">Nucleotide-binding</keyword>
<keyword id="KW-1185">Reference proteome</keyword>
<gene>
    <name evidence="5" type="primary">comGA</name>
    <name evidence="7" type="synonym">cglA</name>
    <name evidence="7" type="ordered locus">spr1864</name>
</gene>
<sequence length="313" mass="35555">MVQEIAQEIIRSARKKGTQDIYFVPKLDAYELHMRVGDERCKIGSYDFEKFAAVISHFKFVAGMNVGEKRRSQLGSCDYAYDHKIASLRLSTVGDYRGHESLVIRLLHDEEQDLHFWFQDIEELGKQYRQRGLYLFAGPVGSGKTTLMHELSKSLFKGQQVMSIEDPVEIKQDDMLQLQLNEAIGLTYENLIKLSLRHRPDLLIIGEIRDSETARAVVRASLTGATVFSTIHAKSIRGVYERLLELGVSEEELAVVLQGVCYQRLIGGGGIVDFASRDYQEHQAAKWNEQIDQLLKDGHITSLQAETEKISYS</sequence>
<comment type="function">
    <text evidence="3 5">Required for uptake of DNA by competent cells (PubMed:12123453). May be involved in assembly of a complex forming a transformation pilus at the surface of competent cells (PubMed:23825953).</text>
</comment>
<comment type="subcellular location">
    <subcellularLocation>
        <location evidence="1">Cell membrane</location>
        <topology evidence="1">Peripheral membrane protein</topology>
        <orientation evidence="1">Cytoplasmic side</orientation>
    </subcellularLocation>
</comment>
<comment type="induction">
    <text evidence="4">Part of the putative comGA-comGB-comGC-comGD-comGE-comGF-comGG operon.</text>
</comment>
<comment type="disruption phenotype">
    <text evidence="4">Abolishes detection of ComGC in the mechanically-sheared fraction of cells, probably corresponding to the pilus.</text>
</comment>
<comment type="similarity">
    <text evidence="6">Belongs to the GSP E family.</text>
</comment>
<name>COMGA_STRR6</name>
<dbReference type="EMBL" id="AE007317">
    <property type="protein sequence ID" value="AAL00666.1"/>
    <property type="molecule type" value="Genomic_DNA"/>
</dbReference>
<dbReference type="PIR" id="D95240">
    <property type="entry name" value="D95240"/>
</dbReference>
<dbReference type="PIR" id="E98104">
    <property type="entry name" value="E98104"/>
</dbReference>
<dbReference type="RefSeq" id="NP_359455.1">
    <property type="nucleotide sequence ID" value="NC_003098.1"/>
</dbReference>
<dbReference type="RefSeq" id="WP_000249564.1">
    <property type="nucleotide sequence ID" value="NC_003098.1"/>
</dbReference>
<dbReference type="SMR" id="Q8DN86"/>
<dbReference type="STRING" id="171101.spr1864"/>
<dbReference type="KEGG" id="spr:spr1864"/>
<dbReference type="PATRIC" id="fig|171101.6.peg.2011"/>
<dbReference type="eggNOG" id="COG2804">
    <property type="taxonomic scope" value="Bacteria"/>
</dbReference>
<dbReference type="HOGENOM" id="CLU_013446_3_1_9"/>
<dbReference type="Proteomes" id="UP000000586">
    <property type="component" value="Chromosome"/>
</dbReference>
<dbReference type="GO" id="GO:0005886">
    <property type="term" value="C:plasma membrane"/>
    <property type="evidence" value="ECO:0007669"/>
    <property type="project" value="UniProtKB-SubCell"/>
</dbReference>
<dbReference type="GO" id="GO:0005524">
    <property type="term" value="F:ATP binding"/>
    <property type="evidence" value="ECO:0007669"/>
    <property type="project" value="UniProtKB-KW"/>
</dbReference>
<dbReference type="GO" id="GO:0016887">
    <property type="term" value="F:ATP hydrolysis activity"/>
    <property type="evidence" value="ECO:0007669"/>
    <property type="project" value="InterPro"/>
</dbReference>
<dbReference type="CDD" id="cd01129">
    <property type="entry name" value="PulE-GspE-like"/>
    <property type="match status" value="1"/>
</dbReference>
<dbReference type="FunFam" id="3.40.50.300:FF:002381">
    <property type="entry name" value="Type II/IV secretion system protein"/>
    <property type="match status" value="1"/>
</dbReference>
<dbReference type="Gene3D" id="3.30.450.90">
    <property type="match status" value="1"/>
</dbReference>
<dbReference type="Gene3D" id="3.40.50.300">
    <property type="entry name" value="P-loop containing nucleotide triphosphate hydrolases"/>
    <property type="match status" value="1"/>
</dbReference>
<dbReference type="InterPro" id="IPR003593">
    <property type="entry name" value="AAA+_ATPase"/>
</dbReference>
<dbReference type="InterPro" id="IPR047667">
    <property type="entry name" value="ATPase_ComGA"/>
</dbReference>
<dbReference type="InterPro" id="IPR027417">
    <property type="entry name" value="P-loop_NTPase"/>
</dbReference>
<dbReference type="InterPro" id="IPR001482">
    <property type="entry name" value="T2SS/T4SS_dom"/>
</dbReference>
<dbReference type="NCBIfam" id="NF041000">
    <property type="entry name" value="ATPase_ComGA"/>
    <property type="match status" value="1"/>
</dbReference>
<dbReference type="PANTHER" id="PTHR30258:SF2">
    <property type="entry name" value="COMG OPERON PROTEIN 1"/>
    <property type="match status" value="1"/>
</dbReference>
<dbReference type="PANTHER" id="PTHR30258">
    <property type="entry name" value="TYPE II SECRETION SYSTEM PROTEIN GSPE-RELATED"/>
    <property type="match status" value="1"/>
</dbReference>
<dbReference type="Pfam" id="PF00437">
    <property type="entry name" value="T2SSE"/>
    <property type="match status" value="1"/>
</dbReference>
<dbReference type="SMART" id="SM00382">
    <property type="entry name" value="AAA"/>
    <property type="match status" value="1"/>
</dbReference>
<dbReference type="SUPFAM" id="SSF52540">
    <property type="entry name" value="P-loop containing nucleoside triphosphate hydrolases"/>
    <property type="match status" value="1"/>
</dbReference>
<dbReference type="PROSITE" id="PS00662">
    <property type="entry name" value="T2SP_E"/>
    <property type="match status" value="1"/>
</dbReference>
<accession>Q8DN86</accession>
<proteinExistence type="evidence at transcript level"/>